<proteinExistence type="inferred from homology"/>
<evidence type="ECO:0000255" key="1">
    <source>
        <dbReference type="HAMAP-Rule" id="MF_01227"/>
    </source>
</evidence>
<accession>A8H1S4</accession>
<dbReference type="EC" id="6.3.4.2" evidence="1"/>
<dbReference type="EMBL" id="CP000851">
    <property type="protein sequence ID" value="ABV86511.1"/>
    <property type="molecule type" value="Genomic_DNA"/>
</dbReference>
<dbReference type="RefSeq" id="WP_012154438.1">
    <property type="nucleotide sequence ID" value="NC_009901.1"/>
</dbReference>
<dbReference type="SMR" id="A8H1S4"/>
<dbReference type="STRING" id="398579.Spea_1184"/>
<dbReference type="MEROPS" id="C26.964"/>
<dbReference type="KEGG" id="spl:Spea_1184"/>
<dbReference type="eggNOG" id="COG0504">
    <property type="taxonomic scope" value="Bacteria"/>
</dbReference>
<dbReference type="HOGENOM" id="CLU_011675_5_0_6"/>
<dbReference type="OrthoDB" id="9801107at2"/>
<dbReference type="UniPathway" id="UPA00159">
    <property type="reaction ID" value="UER00277"/>
</dbReference>
<dbReference type="Proteomes" id="UP000002608">
    <property type="component" value="Chromosome"/>
</dbReference>
<dbReference type="GO" id="GO:0005829">
    <property type="term" value="C:cytosol"/>
    <property type="evidence" value="ECO:0007669"/>
    <property type="project" value="TreeGrafter"/>
</dbReference>
<dbReference type="GO" id="GO:0005524">
    <property type="term" value="F:ATP binding"/>
    <property type="evidence" value="ECO:0007669"/>
    <property type="project" value="UniProtKB-KW"/>
</dbReference>
<dbReference type="GO" id="GO:0003883">
    <property type="term" value="F:CTP synthase activity"/>
    <property type="evidence" value="ECO:0007669"/>
    <property type="project" value="UniProtKB-UniRule"/>
</dbReference>
<dbReference type="GO" id="GO:0004359">
    <property type="term" value="F:glutaminase activity"/>
    <property type="evidence" value="ECO:0007669"/>
    <property type="project" value="RHEA"/>
</dbReference>
<dbReference type="GO" id="GO:0042802">
    <property type="term" value="F:identical protein binding"/>
    <property type="evidence" value="ECO:0007669"/>
    <property type="project" value="TreeGrafter"/>
</dbReference>
<dbReference type="GO" id="GO:0046872">
    <property type="term" value="F:metal ion binding"/>
    <property type="evidence" value="ECO:0007669"/>
    <property type="project" value="UniProtKB-KW"/>
</dbReference>
<dbReference type="GO" id="GO:0044210">
    <property type="term" value="P:'de novo' CTP biosynthetic process"/>
    <property type="evidence" value="ECO:0007669"/>
    <property type="project" value="UniProtKB-UniRule"/>
</dbReference>
<dbReference type="GO" id="GO:0019856">
    <property type="term" value="P:pyrimidine nucleobase biosynthetic process"/>
    <property type="evidence" value="ECO:0007669"/>
    <property type="project" value="TreeGrafter"/>
</dbReference>
<dbReference type="CDD" id="cd03113">
    <property type="entry name" value="CTPS_N"/>
    <property type="match status" value="1"/>
</dbReference>
<dbReference type="CDD" id="cd01746">
    <property type="entry name" value="GATase1_CTP_Synthase"/>
    <property type="match status" value="1"/>
</dbReference>
<dbReference type="FunFam" id="3.40.50.300:FF:000009">
    <property type="entry name" value="CTP synthase"/>
    <property type="match status" value="1"/>
</dbReference>
<dbReference type="FunFam" id="3.40.50.880:FF:000002">
    <property type="entry name" value="CTP synthase"/>
    <property type="match status" value="1"/>
</dbReference>
<dbReference type="Gene3D" id="3.40.50.880">
    <property type="match status" value="1"/>
</dbReference>
<dbReference type="Gene3D" id="3.40.50.300">
    <property type="entry name" value="P-loop containing nucleotide triphosphate hydrolases"/>
    <property type="match status" value="1"/>
</dbReference>
<dbReference type="HAMAP" id="MF_01227">
    <property type="entry name" value="PyrG"/>
    <property type="match status" value="1"/>
</dbReference>
<dbReference type="InterPro" id="IPR029062">
    <property type="entry name" value="Class_I_gatase-like"/>
</dbReference>
<dbReference type="InterPro" id="IPR004468">
    <property type="entry name" value="CTP_synthase"/>
</dbReference>
<dbReference type="InterPro" id="IPR017456">
    <property type="entry name" value="CTP_synthase_N"/>
</dbReference>
<dbReference type="InterPro" id="IPR017926">
    <property type="entry name" value="GATASE"/>
</dbReference>
<dbReference type="InterPro" id="IPR033828">
    <property type="entry name" value="GATase1_CTP_Synthase"/>
</dbReference>
<dbReference type="InterPro" id="IPR027417">
    <property type="entry name" value="P-loop_NTPase"/>
</dbReference>
<dbReference type="NCBIfam" id="NF003792">
    <property type="entry name" value="PRK05380.1"/>
    <property type="match status" value="1"/>
</dbReference>
<dbReference type="NCBIfam" id="TIGR00337">
    <property type="entry name" value="PyrG"/>
    <property type="match status" value="1"/>
</dbReference>
<dbReference type="PANTHER" id="PTHR11550">
    <property type="entry name" value="CTP SYNTHASE"/>
    <property type="match status" value="1"/>
</dbReference>
<dbReference type="PANTHER" id="PTHR11550:SF0">
    <property type="entry name" value="CTP SYNTHASE-RELATED"/>
    <property type="match status" value="1"/>
</dbReference>
<dbReference type="Pfam" id="PF06418">
    <property type="entry name" value="CTP_synth_N"/>
    <property type="match status" value="1"/>
</dbReference>
<dbReference type="Pfam" id="PF00117">
    <property type="entry name" value="GATase"/>
    <property type="match status" value="1"/>
</dbReference>
<dbReference type="SUPFAM" id="SSF52317">
    <property type="entry name" value="Class I glutamine amidotransferase-like"/>
    <property type="match status" value="1"/>
</dbReference>
<dbReference type="SUPFAM" id="SSF52540">
    <property type="entry name" value="P-loop containing nucleoside triphosphate hydrolases"/>
    <property type="match status" value="1"/>
</dbReference>
<dbReference type="PROSITE" id="PS51273">
    <property type="entry name" value="GATASE_TYPE_1"/>
    <property type="match status" value="1"/>
</dbReference>
<comment type="function">
    <text evidence="1">Catalyzes the ATP-dependent amination of UTP to CTP with either L-glutamine or ammonia as the source of nitrogen. Regulates intracellular CTP levels through interactions with the four ribonucleotide triphosphates.</text>
</comment>
<comment type="catalytic activity">
    <reaction evidence="1">
        <text>UTP + L-glutamine + ATP + H2O = CTP + L-glutamate + ADP + phosphate + 2 H(+)</text>
        <dbReference type="Rhea" id="RHEA:26426"/>
        <dbReference type="ChEBI" id="CHEBI:15377"/>
        <dbReference type="ChEBI" id="CHEBI:15378"/>
        <dbReference type="ChEBI" id="CHEBI:29985"/>
        <dbReference type="ChEBI" id="CHEBI:30616"/>
        <dbReference type="ChEBI" id="CHEBI:37563"/>
        <dbReference type="ChEBI" id="CHEBI:43474"/>
        <dbReference type="ChEBI" id="CHEBI:46398"/>
        <dbReference type="ChEBI" id="CHEBI:58359"/>
        <dbReference type="ChEBI" id="CHEBI:456216"/>
        <dbReference type="EC" id="6.3.4.2"/>
    </reaction>
</comment>
<comment type="catalytic activity">
    <reaction evidence="1">
        <text>L-glutamine + H2O = L-glutamate + NH4(+)</text>
        <dbReference type="Rhea" id="RHEA:15889"/>
        <dbReference type="ChEBI" id="CHEBI:15377"/>
        <dbReference type="ChEBI" id="CHEBI:28938"/>
        <dbReference type="ChEBI" id="CHEBI:29985"/>
        <dbReference type="ChEBI" id="CHEBI:58359"/>
    </reaction>
</comment>
<comment type="catalytic activity">
    <reaction evidence="1">
        <text>UTP + NH4(+) + ATP = CTP + ADP + phosphate + 2 H(+)</text>
        <dbReference type="Rhea" id="RHEA:16597"/>
        <dbReference type="ChEBI" id="CHEBI:15378"/>
        <dbReference type="ChEBI" id="CHEBI:28938"/>
        <dbReference type="ChEBI" id="CHEBI:30616"/>
        <dbReference type="ChEBI" id="CHEBI:37563"/>
        <dbReference type="ChEBI" id="CHEBI:43474"/>
        <dbReference type="ChEBI" id="CHEBI:46398"/>
        <dbReference type="ChEBI" id="CHEBI:456216"/>
    </reaction>
</comment>
<comment type="activity regulation">
    <text evidence="1">Allosterically activated by GTP, when glutamine is the substrate; GTP has no effect on the reaction when ammonia is the substrate. The allosteric effector GTP functions by stabilizing the protein conformation that binds the tetrahedral intermediate(s) formed during glutamine hydrolysis. Inhibited by the product CTP, via allosteric rather than competitive inhibition.</text>
</comment>
<comment type="pathway">
    <text evidence="1">Pyrimidine metabolism; CTP biosynthesis via de novo pathway; CTP from UDP: step 2/2.</text>
</comment>
<comment type="subunit">
    <text evidence="1">Homotetramer.</text>
</comment>
<comment type="miscellaneous">
    <text evidence="1">CTPSs have evolved a hybrid strategy for distinguishing between UTP and CTP. The overlapping regions of the product feedback inhibitory and substrate sites recognize a common feature in both compounds, the triphosphate moiety. To differentiate isosteric substrate and product pyrimidine rings, an additional pocket far from the expected kinase/ligase catalytic site, specifically recognizes the cytosine and ribose portions of the product inhibitor.</text>
</comment>
<comment type="similarity">
    <text evidence="1">Belongs to the CTP synthase family.</text>
</comment>
<reference key="1">
    <citation type="submission" date="2007-10" db="EMBL/GenBank/DDBJ databases">
        <title>Complete sequence of Shewanella pealeana ATCC 700345.</title>
        <authorList>
            <consortium name="US DOE Joint Genome Institute"/>
            <person name="Copeland A."/>
            <person name="Lucas S."/>
            <person name="Lapidus A."/>
            <person name="Barry K."/>
            <person name="Glavina del Rio T."/>
            <person name="Dalin E."/>
            <person name="Tice H."/>
            <person name="Pitluck S."/>
            <person name="Chertkov O."/>
            <person name="Brettin T."/>
            <person name="Bruce D."/>
            <person name="Detter J.C."/>
            <person name="Han C."/>
            <person name="Schmutz J."/>
            <person name="Larimer F."/>
            <person name="Land M."/>
            <person name="Hauser L."/>
            <person name="Kyrpides N."/>
            <person name="Kim E."/>
            <person name="Zhao J.-S.Z."/>
            <person name="Manno D."/>
            <person name="Hawari J."/>
            <person name="Richardson P."/>
        </authorList>
    </citation>
    <scope>NUCLEOTIDE SEQUENCE [LARGE SCALE GENOMIC DNA]</scope>
    <source>
        <strain>ATCC 700345 / ANG-SQ1</strain>
    </source>
</reference>
<protein>
    <recommendedName>
        <fullName evidence="1">CTP synthase</fullName>
        <ecNumber evidence="1">6.3.4.2</ecNumber>
    </recommendedName>
    <alternativeName>
        <fullName evidence="1">Cytidine 5'-triphosphate synthase</fullName>
    </alternativeName>
    <alternativeName>
        <fullName evidence="1">Cytidine triphosphate synthetase</fullName>
        <shortName evidence="1">CTP synthetase</shortName>
        <shortName evidence="1">CTPS</shortName>
    </alternativeName>
    <alternativeName>
        <fullName evidence="1">UTP--ammonia ligase</fullName>
    </alternativeName>
</protein>
<name>PYRG_SHEPA</name>
<sequence length="546" mass="60081">MTTRYIFVTGGVVSSLGKGIAAASLAAILEARGLNVTIMKLDPYINVDPGTMSPTQHGEVFVTEDGAETDLDLGHYERFIRTKMNRRNNFTTGRIYEEVLRKERRGDYLGATIQVIPHITNAIKEKVLAGGEGHDVAIVEIGGTVGDIESLPFLESIRQLGVELGRDRTLFMHLTLVPFLGAAGEVKTKPTQHSVKELRSIGIAPDVLVCRGDRAIPANEKAKISLFCNVEERAVISLKDVDSIYKIPALLKAQGLDQLVTKRFGIDCKEADLAEWEKVVYQEANPVGEVTIGMVGKYIELPDAYKSVNEALKHAGLFNRVSVNIKYIDSQNVEAKGDEVLQGLDGILVPGGFGERGVEGKIMAAKFARENNLPYFGICLGMQVALIEFARHVAGLEGAHSTEFKPETPHPVVGLITEWINEDGQVEERHEESDLGGTMRLGAQLCHLEEGTKAAAAYKSTTCVERHRHRYEVNNNYKERLEKAGLIFSGLSSDRSLVEMIELPNHPWFVAGQFHPEFTSTPRDGQPLFEGFVAAAAAYQKRDLED</sequence>
<keyword id="KW-0067">ATP-binding</keyword>
<keyword id="KW-0315">Glutamine amidotransferase</keyword>
<keyword id="KW-0436">Ligase</keyword>
<keyword id="KW-0460">Magnesium</keyword>
<keyword id="KW-0479">Metal-binding</keyword>
<keyword id="KW-0547">Nucleotide-binding</keyword>
<keyword id="KW-0665">Pyrimidine biosynthesis</keyword>
<keyword id="KW-1185">Reference proteome</keyword>
<organism>
    <name type="scientific">Shewanella pealeana (strain ATCC 700345 / ANG-SQ1)</name>
    <dbReference type="NCBI Taxonomy" id="398579"/>
    <lineage>
        <taxon>Bacteria</taxon>
        <taxon>Pseudomonadati</taxon>
        <taxon>Pseudomonadota</taxon>
        <taxon>Gammaproteobacteria</taxon>
        <taxon>Alteromonadales</taxon>
        <taxon>Shewanellaceae</taxon>
        <taxon>Shewanella</taxon>
    </lineage>
</organism>
<feature type="chain" id="PRO_1000139573" description="CTP synthase">
    <location>
        <begin position="1"/>
        <end position="546"/>
    </location>
</feature>
<feature type="domain" description="Glutamine amidotransferase type-1" evidence="1">
    <location>
        <begin position="291"/>
        <end position="542"/>
    </location>
</feature>
<feature type="region of interest" description="Amidoligase domain" evidence="1">
    <location>
        <begin position="1"/>
        <end position="266"/>
    </location>
</feature>
<feature type="active site" description="Nucleophile; for glutamine hydrolysis" evidence="1">
    <location>
        <position position="379"/>
    </location>
</feature>
<feature type="active site" evidence="1">
    <location>
        <position position="515"/>
    </location>
</feature>
<feature type="active site" evidence="1">
    <location>
        <position position="517"/>
    </location>
</feature>
<feature type="binding site" evidence="1">
    <location>
        <position position="14"/>
    </location>
    <ligand>
        <name>CTP</name>
        <dbReference type="ChEBI" id="CHEBI:37563"/>
        <note>allosteric inhibitor</note>
    </ligand>
</feature>
<feature type="binding site" evidence="1">
    <location>
        <position position="14"/>
    </location>
    <ligand>
        <name>UTP</name>
        <dbReference type="ChEBI" id="CHEBI:46398"/>
    </ligand>
</feature>
<feature type="binding site" evidence="1">
    <location>
        <begin position="15"/>
        <end position="20"/>
    </location>
    <ligand>
        <name>ATP</name>
        <dbReference type="ChEBI" id="CHEBI:30616"/>
    </ligand>
</feature>
<feature type="binding site" evidence="1">
    <location>
        <position position="72"/>
    </location>
    <ligand>
        <name>ATP</name>
        <dbReference type="ChEBI" id="CHEBI:30616"/>
    </ligand>
</feature>
<feature type="binding site" evidence="1">
    <location>
        <position position="72"/>
    </location>
    <ligand>
        <name>Mg(2+)</name>
        <dbReference type="ChEBI" id="CHEBI:18420"/>
    </ligand>
</feature>
<feature type="binding site" evidence="1">
    <location>
        <position position="140"/>
    </location>
    <ligand>
        <name>Mg(2+)</name>
        <dbReference type="ChEBI" id="CHEBI:18420"/>
    </ligand>
</feature>
<feature type="binding site" evidence="1">
    <location>
        <begin position="147"/>
        <end position="149"/>
    </location>
    <ligand>
        <name>CTP</name>
        <dbReference type="ChEBI" id="CHEBI:37563"/>
        <note>allosteric inhibitor</note>
    </ligand>
</feature>
<feature type="binding site" evidence="1">
    <location>
        <begin position="187"/>
        <end position="192"/>
    </location>
    <ligand>
        <name>CTP</name>
        <dbReference type="ChEBI" id="CHEBI:37563"/>
        <note>allosteric inhibitor</note>
    </ligand>
</feature>
<feature type="binding site" evidence="1">
    <location>
        <begin position="187"/>
        <end position="192"/>
    </location>
    <ligand>
        <name>UTP</name>
        <dbReference type="ChEBI" id="CHEBI:46398"/>
    </ligand>
</feature>
<feature type="binding site" evidence="1">
    <location>
        <position position="223"/>
    </location>
    <ligand>
        <name>CTP</name>
        <dbReference type="ChEBI" id="CHEBI:37563"/>
        <note>allosteric inhibitor</note>
    </ligand>
</feature>
<feature type="binding site" evidence="1">
    <location>
        <position position="223"/>
    </location>
    <ligand>
        <name>UTP</name>
        <dbReference type="ChEBI" id="CHEBI:46398"/>
    </ligand>
</feature>
<feature type="binding site" evidence="1">
    <location>
        <begin position="239"/>
        <end position="241"/>
    </location>
    <ligand>
        <name>ATP</name>
        <dbReference type="ChEBI" id="CHEBI:30616"/>
    </ligand>
</feature>
<feature type="binding site" evidence="1">
    <location>
        <position position="352"/>
    </location>
    <ligand>
        <name>L-glutamine</name>
        <dbReference type="ChEBI" id="CHEBI:58359"/>
    </ligand>
</feature>
<feature type="binding site" evidence="1">
    <location>
        <begin position="380"/>
        <end position="383"/>
    </location>
    <ligand>
        <name>L-glutamine</name>
        <dbReference type="ChEBI" id="CHEBI:58359"/>
    </ligand>
</feature>
<feature type="binding site" evidence="1">
    <location>
        <position position="403"/>
    </location>
    <ligand>
        <name>L-glutamine</name>
        <dbReference type="ChEBI" id="CHEBI:58359"/>
    </ligand>
</feature>
<feature type="binding site" evidence="1">
    <location>
        <position position="470"/>
    </location>
    <ligand>
        <name>L-glutamine</name>
        <dbReference type="ChEBI" id="CHEBI:58359"/>
    </ligand>
</feature>
<gene>
    <name evidence="1" type="primary">pyrG</name>
    <name type="ordered locus">Spea_1184</name>
</gene>